<protein>
    <recommendedName>
        <fullName>Defensin-like protein 130</fullName>
    </recommendedName>
    <alternativeName>
        <fullName>Low-molecular-weight cysteine-rich protein 28</fullName>
        <shortName>Protein LCR28</shortName>
    </alternativeName>
</protein>
<accession>P82743</accession>
<accession>Q2V320</accession>
<feature type="signal peptide" evidence="2">
    <location>
        <begin position="1"/>
        <end position="21"/>
    </location>
</feature>
<feature type="chain" id="PRO_0000017267" description="Defensin-like protein 130">
    <location>
        <begin position="22"/>
        <end position="81"/>
    </location>
</feature>
<feature type="disulfide bond" evidence="1">
    <location>
        <begin position="32"/>
        <end position="81"/>
    </location>
</feature>
<feature type="disulfide bond" evidence="1">
    <location>
        <begin position="41"/>
        <end position="63"/>
    </location>
</feature>
<feature type="disulfide bond" evidence="1">
    <location>
        <begin position="46"/>
        <end position="75"/>
    </location>
</feature>
<feature type="disulfide bond" evidence="1">
    <location>
        <begin position="50"/>
        <end position="77"/>
    </location>
</feature>
<comment type="subcellular location">
    <subcellularLocation>
        <location evidence="1">Secreted</location>
    </subcellularLocation>
</comment>
<comment type="similarity">
    <text evidence="4">Belongs to the DEFL family.</text>
</comment>
<reference evidence="4" key="1">
    <citation type="journal article" date="1997" name="DNA Res.">
        <title>Structural analysis of Arabidopsis thaliana chromosome 5. III. Sequence features of the regions of 1,191,918 bp covered by seventeen physically assigned P1 clones.</title>
        <authorList>
            <person name="Nakamura Y."/>
            <person name="Sato S."/>
            <person name="Kaneko T."/>
            <person name="Kotani H."/>
            <person name="Asamizu E."/>
            <person name="Miyajima N."/>
            <person name="Tabata S."/>
        </authorList>
    </citation>
    <scope>NUCLEOTIDE SEQUENCE [LARGE SCALE GENOMIC DNA]</scope>
    <source>
        <strain evidence="3">cv. Columbia</strain>
    </source>
</reference>
<reference evidence="4" key="2">
    <citation type="journal article" date="2017" name="Plant J.">
        <title>Araport11: a complete reannotation of the Arabidopsis thaliana reference genome.</title>
        <authorList>
            <person name="Cheng C.Y."/>
            <person name="Krishnakumar V."/>
            <person name="Chan A.P."/>
            <person name="Thibaud-Nissen F."/>
            <person name="Schobel S."/>
            <person name="Town C.D."/>
        </authorList>
    </citation>
    <scope>GENOME REANNOTATION</scope>
    <source>
        <strain>cv. Columbia</strain>
    </source>
</reference>
<reference evidence="4" key="3">
    <citation type="journal article" date="2001" name="Plant Mol. Biol.">
        <title>Two large Arabidopsis thaliana gene families are homologous to the Brassica gene superfamily that encodes pollen coat proteins and the male component of the self-incompatibility response.</title>
        <authorList>
            <person name="Vanoosthuyse V."/>
            <person name="Miege C."/>
            <person name="Dumas C."/>
            <person name="Cock J.M."/>
        </authorList>
    </citation>
    <scope>IDENTIFICATION</scope>
</reference>
<reference key="4">
    <citation type="journal article" date="2005" name="Plant Physiol.">
        <title>Genome organization of more than 300 defensin-like genes in Arabidopsis.</title>
        <authorList>
            <person name="Silverstein K.A.T."/>
            <person name="Graham M.A."/>
            <person name="Paape T.D."/>
            <person name="VandenBosch K.A."/>
        </authorList>
    </citation>
    <scope>GENE FAMILY</scope>
</reference>
<proteinExistence type="evidence at transcript level"/>
<dbReference type="EMBL" id="AB007647">
    <property type="status" value="NOT_ANNOTATED_CDS"/>
    <property type="molecule type" value="Genomic_DNA"/>
</dbReference>
<dbReference type="EMBL" id="CP002688">
    <property type="protein sequence ID" value="AED94865.1"/>
    <property type="molecule type" value="Genomic_DNA"/>
</dbReference>
<dbReference type="RefSeq" id="NP_001031997.2">
    <property type="nucleotide sequence ID" value="NM_001036920.2"/>
</dbReference>
<dbReference type="STRING" id="3702.P82743"/>
<dbReference type="PaxDb" id="3702-AT5G42797.1"/>
<dbReference type="EnsemblPlants" id="AT5G42797.1">
    <property type="protein sequence ID" value="AT5G42797.1"/>
    <property type="gene ID" value="AT5G42797"/>
</dbReference>
<dbReference type="GeneID" id="3771408"/>
<dbReference type="Gramene" id="AT5G42797.1">
    <property type="protein sequence ID" value="AT5G42797.1"/>
    <property type="gene ID" value="AT5G42797"/>
</dbReference>
<dbReference type="KEGG" id="ath:AT5G42797"/>
<dbReference type="Araport" id="AT5G42797"/>
<dbReference type="TAIR" id="AT5G42797">
    <property type="gene designation" value="LCR28"/>
</dbReference>
<dbReference type="HOGENOM" id="CLU_182511_2_0_1"/>
<dbReference type="InParanoid" id="P82743"/>
<dbReference type="OMA" id="NCEIDQC"/>
<dbReference type="PhylomeDB" id="P82743"/>
<dbReference type="PRO" id="PR:P82743"/>
<dbReference type="Proteomes" id="UP000006548">
    <property type="component" value="Chromosome 5"/>
</dbReference>
<dbReference type="ExpressionAtlas" id="P82743">
    <property type="expression patterns" value="baseline"/>
</dbReference>
<dbReference type="GO" id="GO:0005576">
    <property type="term" value="C:extracellular region"/>
    <property type="evidence" value="ECO:0007669"/>
    <property type="project" value="UniProtKB-SubCell"/>
</dbReference>
<dbReference type="GO" id="GO:0050832">
    <property type="term" value="P:defense response to fungus"/>
    <property type="evidence" value="ECO:0007669"/>
    <property type="project" value="UniProtKB-KW"/>
</dbReference>
<dbReference type="GO" id="GO:0031640">
    <property type="term" value="P:killing of cells of another organism"/>
    <property type="evidence" value="ECO:0007669"/>
    <property type="project" value="UniProtKB-KW"/>
</dbReference>
<dbReference type="InterPro" id="IPR010851">
    <property type="entry name" value="DEFL"/>
</dbReference>
<dbReference type="PANTHER" id="PTHR33830:SF10">
    <property type="entry name" value="DEFENSIN-LIKE PROTEIN 122-RELATED"/>
    <property type="match status" value="1"/>
</dbReference>
<dbReference type="PANTHER" id="PTHR33830">
    <property type="entry name" value="DEFENSIN-LIKE PROTEIN 184-RELATED"/>
    <property type="match status" value="1"/>
</dbReference>
<dbReference type="Pfam" id="PF07333">
    <property type="entry name" value="SLR1-BP"/>
    <property type="match status" value="1"/>
</dbReference>
<keyword id="KW-0929">Antimicrobial</keyword>
<keyword id="KW-1015">Disulfide bond</keyword>
<keyword id="KW-0295">Fungicide</keyword>
<keyword id="KW-0611">Plant defense</keyword>
<keyword id="KW-1185">Reference proteome</keyword>
<keyword id="KW-0964">Secreted</keyword>
<keyword id="KW-0732">Signal</keyword>
<name>DF130_ARATH</name>
<organism evidence="4">
    <name type="scientific">Arabidopsis thaliana</name>
    <name type="common">Mouse-ear cress</name>
    <dbReference type="NCBI Taxonomy" id="3702"/>
    <lineage>
        <taxon>Eukaryota</taxon>
        <taxon>Viridiplantae</taxon>
        <taxon>Streptophyta</taxon>
        <taxon>Embryophyta</taxon>
        <taxon>Tracheophyta</taxon>
        <taxon>Spermatophyta</taxon>
        <taxon>Magnoliopsida</taxon>
        <taxon>eudicotyledons</taxon>
        <taxon>Gunneridae</taxon>
        <taxon>Pentapetalae</taxon>
        <taxon>rosids</taxon>
        <taxon>malvids</taxon>
        <taxon>Brassicales</taxon>
        <taxon>Brassicaceae</taxon>
        <taxon>Camelineae</taxon>
        <taxon>Arabidopsis</taxon>
    </lineage>
</organism>
<evidence type="ECO:0000250" key="1"/>
<evidence type="ECO:0000255" key="2"/>
<evidence type="ECO:0000269" key="3">
    <source>
    </source>
</evidence>
<evidence type="ECO:0000305" key="4"/>
<sequence>MTKNTSLTIFMVVLVIGMLYTSIFIKYSDRTCHVYIKAENCEIDQCNWECGTKYKRVGVQGLCVPPGFDPIDQACLCSFNC</sequence>
<gene>
    <name type="primary">LCR28</name>
    <name type="ordered locus">At5g42797</name>
    <name type="ORF">MJB21</name>
</gene>